<proteinExistence type="evidence at transcript level"/>
<accession>Q28DH0</accession>
<evidence type="ECO:0000250" key="1"/>
<evidence type="ECO:0000305" key="2"/>
<organism>
    <name type="scientific">Xenopus tropicalis</name>
    <name type="common">Western clawed frog</name>
    <name type="synonym">Silurana tropicalis</name>
    <dbReference type="NCBI Taxonomy" id="8364"/>
    <lineage>
        <taxon>Eukaryota</taxon>
        <taxon>Metazoa</taxon>
        <taxon>Chordata</taxon>
        <taxon>Craniata</taxon>
        <taxon>Vertebrata</taxon>
        <taxon>Euteleostomi</taxon>
        <taxon>Amphibia</taxon>
        <taxon>Batrachia</taxon>
        <taxon>Anura</taxon>
        <taxon>Pipoidea</taxon>
        <taxon>Pipidae</taxon>
        <taxon>Xenopodinae</taxon>
        <taxon>Xenopus</taxon>
        <taxon>Silurana</taxon>
    </lineage>
</organism>
<keyword id="KW-0545">Nucleotide biosynthesis</keyword>
<keyword id="KW-1185">Reference proteome</keyword>
<protein>
    <recommendedName>
        <fullName>Phosphoribosyl pyrophosphate synthase-associated protein 2</fullName>
        <shortName>PRPP synthase-associated protein 2</shortName>
    </recommendedName>
</protein>
<name>KPRB_XENTR</name>
<reference key="1">
    <citation type="submission" date="2006-10" db="EMBL/GenBank/DDBJ databases">
        <authorList>
            <consortium name="Sanger Xenopus tropicalis EST/cDNA project"/>
        </authorList>
    </citation>
    <scope>NUCLEOTIDE SEQUENCE [LARGE SCALE MRNA]</scope>
    <source>
        <tissue>Egg</tissue>
    </source>
</reference>
<reference key="2">
    <citation type="submission" date="2006-08" db="EMBL/GenBank/DDBJ databases">
        <authorList>
            <consortium name="NIH - Xenopus Gene Collection (XGC) project"/>
        </authorList>
    </citation>
    <scope>NUCLEOTIDE SEQUENCE [LARGE SCALE MRNA]</scope>
    <source>
        <strain>N6</strain>
        <tissue>Spleen</tissue>
    </source>
</reference>
<feature type="chain" id="PRO_0000366928" description="Phosphoribosyl pyrophosphate synthase-associated protein 2">
    <location>
        <begin position="1"/>
        <end position="358"/>
    </location>
</feature>
<comment type="function">
    <text evidence="1">Seems to play a negative regulatory role in 5-phosphoribose 1-diphosphate synthesis.</text>
</comment>
<comment type="similarity">
    <text evidence="2">Belongs to the ribose-phosphate pyrophosphokinase family.</text>
</comment>
<gene>
    <name type="primary">prpsap2</name>
    <name type="ORF">TEgg105n03.1</name>
</gene>
<sequence length="358" mass="39628">MNVTKGGLVLFSANSNASCVELAKRIAERLGVELGKVQVYQEPNRETRVQIQESVRGKDVFIIQTVSKDVNTTIMELLIMVYACRTSCAKTISGVIPYFPYSKQCKMRKRGSIVSKLLASMMCKAGLTHFITMDLHQKEIQGFFNIPVDNLRASPFLLQYIQEEIPDYRNAVIVAKSPSSAKRAQSFAERLRLGLAVIHGEAQDAESDMVDGRHSPPVVKNIGAAMHPSLEIPLMFPKEKPPITVVGDVGGRIAIIVDDIIDDVDSFVAAADTLKERGAYKIFVMATHGLLSSEAPRLIEESTIDEVVVTNTIPHEIQKLQCPKIKTVDISMILSEAIRRIHNGESMSYLFRNIGVDD</sequence>
<dbReference type="EMBL" id="CR855518">
    <property type="protein sequence ID" value="CAJ81381.1"/>
    <property type="molecule type" value="mRNA"/>
</dbReference>
<dbReference type="EMBL" id="BC121509">
    <property type="protein sequence ID" value="AAI21510.1"/>
    <property type="molecule type" value="mRNA"/>
</dbReference>
<dbReference type="RefSeq" id="NP_001017337.1">
    <property type="nucleotide sequence ID" value="NM_001017337.3"/>
</dbReference>
<dbReference type="RefSeq" id="XP_012825932.1">
    <property type="nucleotide sequence ID" value="XM_012970478.3"/>
</dbReference>
<dbReference type="RefSeq" id="XP_012825933.1">
    <property type="nucleotide sequence ID" value="XM_012970479.2"/>
</dbReference>
<dbReference type="RefSeq" id="XP_012825934.1">
    <property type="nucleotide sequence ID" value="XM_012970480.2"/>
</dbReference>
<dbReference type="RefSeq" id="XP_017952621.1">
    <property type="nucleotide sequence ID" value="XM_018097132.1"/>
</dbReference>
<dbReference type="SMR" id="Q28DH0"/>
<dbReference type="FunCoup" id="Q28DH0">
    <property type="interactions" value="631"/>
</dbReference>
<dbReference type="STRING" id="8364.ENSXETP00000000501"/>
<dbReference type="DNASU" id="550091"/>
<dbReference type="GeneID" id="550091"/>
<dbReference type="KEGG" id="xtr:550091"/>
<dbReference type="AGR" id="Xenbase:XB-GENE-981784"/>
<dbReference type="CTD" id="5636"/>
<dbReference type="Xenbase" id="XB-GENE-981784">
    <property type="gene designation" value="prpsap2"/>
</dbReference>
<dbReference type="InParanoid" id="Q28DH0"/>
<dbReference type="OMA" id="LHADQVH"/>
<dbReference type="OrthoDB" id="413572at2759"/>
<dbReference type="Proteomes" id="UP000008143">
    <property type="component" value="Chromosome 9"/>
</dbReference>
<dbReference type="Bgee" id="ENSXETG00000041223">
    <property type="expression patterns" value="Expressed in skeletal muscle tissue and 12 other cell types or tissues"/>
</dbReference>
<dbReference type="GO" id="GO:0000287">
    <property type="term" value="F:magnesium ion binding"/>
    <property type="evidence" value="ECO:0007669"/>
    <property type="project" value="InterPro"/>
</dbReference>
<dbReference type="GO" id="GO:0009165">
    <property type="term" value="P:nucleotide biosynthetic process"/>
    <property type="evidence" value="ECO:0007669"/>
    <property type="project" value="UniProtKB-KW"/>
</dbReference>
<dbReference type="FunFam" id="3.40.50.2020:FF:000012">
    <property type="entry name" value="Phosphoribosyl pyrophosphate synthase-associated protein 2 isoform 1"/>
    <property type="match status" value="1"/>
</dbReference>
<dbReference type="FunFam" id="3.40.50.2020:FF:000014">
    <property type="entry name" value="Ribose-phosphate pyrophosphokinase 1"/>
    <property type="match status" value="1"/>
</dbReference>
<dbReference type="Gene3D" id="3.40.50.2020">
    <property type="match status" value="2"/>
</dbReference>
<dbReference type="InterPro" id="IPR029099">
    <property type="entry name" value="Pribosyltran_N"/>
</dbReference>
<dbReference type="InterPro" id="IPR029057">
    <property type="entry name" value="PRTase-like"/>
</dbReference>
<dbReference type="InterPro" id="IPR005946">
    <property type="entry name" value="Rib-P_diPkinase"/>
</dbReference>
<dbReference type="NCBIfam" id="TIGR01251">
    <property type="entry name" value="ribP_PPkin"/>
    <property type="match status" value="1"/>
</dbReference>
<dbReference type="PANTHER" id="PTHR10210:SF29">
    <property type="entry name" value="PHOSPHORIBOSYL PYROPHOSPHATE SYNTHASE-ASSOCIATED PROTEIN 2"/>
    <property type="match status" value="1"/>
</dbReference>
<dbReference type="PANTHER" id="PTHR10210">
    <property type="entry name" value="RIBOSE-PHOSPHATE DIPHOSPHOKINASE FAMILY MEMBER"/>
    <property type="match status" value="1"/>
</dbReference>
<dbReference type="Pfam" id="PF14572">
    <property type="entry name" value="Pribosyl_synth"/>
    <property type="match status" value="1"/>
</dbReference>
<dbReference type="Pfam" id="PF13793">
    <property type="entry name" value="Pribosyltran_N"/>
    <property type="match status" value="1"/>
</dbReference>
<dbReference type="SMART" id="SM01400">
    <property type="entry name" value="Pribosyltran_N"/>
    <property type="match status" value="1"/>
</dbReference>
<dbReference type="SUPFAM" id="SSF53271">
    <property type="entry name" value="PRTase-like"/>
    <property type="match status" value="2"/>
</dbReference>